<proteinExistence type="inferred from homology"/>
<keyword id="KW-0408">Iron</keyword>
<keyword id="KW-0411">Iron-sulfur</keyword>
<keyword id="KW-0479">Metal-binding</keyword>
<keyword id="KW-0496">Mitochondrion</keyword>
<keyword id="KW-1185">Reference proteome</keyword>
<keyword id="KW-0809">Transit peptide</keyword>
<feature type="transit peptide" description="Mitochondrion" evidence="2">
    <location>
        <begin position="1"/>
        <end position="66"/>
    </location>
</feature>
<feature type="chain" id="PRO_0000388695" description="NFU1 iron-sulfur cluster scaffold homolog, mitochondrial" evidence="2">
    <location>
        <begin position="67"/>
        <end position="286"/>
    </location>
</feature>
<feature type="region of interest" description="NifU" evidence="2">
    <location>
        <begin position="182"/>
        <end position="250"/>
    </location>
</feature>
<feature type="binding site" evidence="1">
    <location>
        <position position="219"/>
    </location>
    <ligand>
        <name>[4Fe-4S] cluster</name>
        <dbReference type="ChEBI" id="CHEBI:49883"/>
        <note>ligand shared between dimeric partners</note>
    </ligand>
</feature>
<feature type="binding site" evidence="1">
    <location>
        <position position="222"/>
    </location>
    <ligand>
        <name>[4Fe-4S] cluster</name>
        <dbReference type="ChEBI" id="CHEBI:49883"/>
        <note>ligand shared between dimeric partners</note>
    </ligand>
</feature>
<evidence type="ECO:0000250" key="1">
    <source>
        <dbReference type="UniProtKB" id="Q9UMS0"/>
    </source>
</evidence>
<evidence type="ECO:0000255" key="2"/>
<evidence type="ECO:0000305" key="3"/>
<evidence type="ECO:0000312" key="4">
    <source>
        <dbReference type="EMBL" id="EDV34492.1"/>
    </source>
</evidence>
<protein>
    <recommendedName>
        <fullName evidence="1">NFU1 iron-sulfur cluster scaffold homolog, mitochondrial</fullName>
    </recommendedName>
</protein>
<name>NFU1_DROAN</name>
<gene>
    <name type="ORF">GF20932</name>
</gene>
<accession>B3MRT7</accession>
<comment type="function">
    <text evidence="1">Molecular scaffold for [Fe-S] cluster assembly of mitochondrial iron-sulfur proteins.</text>
</comment>
<comment type="subcellular location">
    <subcellularLocation>
        <location evidence="2">Mitochondrion</location>
    </subcellularLocation>
</comment>
<comment type="similarity">
    <text evidence="3">Belongs to the NifU family.</text>
</comment>
<organism>
    <name type="scientific">Drosophila ananassae</name>
    <name type="common">Fruit fly</name>
    <dbReference type="NCBI Taxonomy" id="7217"/>
    <lineage>
        <taxon>Eukaryota</taxon>
        <taxon>Metazoa</taxon>
        <taxon>Ecdysozoa</taxon>
        <taxon>Arthropoda</taxon>
        <taxon>Hexapoda</taxon>
        <taxon>Insecta</taxon>
        <taxon>Pterygota</taxon>
        <taxon>Neoptera</taxon>
        <taxon>Endopterygota</taxon>
        <taxon>Diptera</taxon>
        <taxon>Brachycera</taxon>
        <taxon>Muscomorpha</taxon>
        <taxon>Ephydroidea</taxon>
        <taxon>Drosophilidae</taxon>
        <taxon>Drosophila</taxon>
        <taxon>Sophophora</taxon>
    </lineage>
</organism>
<reference evidence="4" key="1">
    <citation type="journal article" date="2007" name="Nature">
        <title>Evolution of genes and genomes on the Drosophila phylogeny.</title>
        <authorList>
            <consortium name="Drosophila 12 genomes consortium"/>
        </authorList>
    </citation>
    <scope>NUCLEOTIDE SEQUENCE [LARGE SCALE GENOMIC DNA]</scope>
    <source>
        <strain evidence="4">Tucson 14024-0371.13</strain>
    </source>
</reference>
<sequence>MSKLLTNTALSTFRSTRFAARQLSRNFGGIASTAQPVNLKAGYGLDYKKGLLQTQQRQIQLSGARNMFIQTQDTPNPESLKFLPGVEVLGKGNTHDFPSGTTAHGSPLAKLLFRVEGVRAVFFGADFITISKEEGAEWSLIKPEVFAVIMDFFASGLPILHESTPNADTEILEDDDETVMMIKELLDTRIRPTVQEDGGDIVFMGYENGIVKLKMQGSCSSCPSSIVTLKNGVQNMLQFYIPEVESVEQVFDAVDKMADSEFERFERNLKALKEKDSAAPAGGGTN</sequence>
<dbReference type="EMBL" id="CH902622">
    <property type="protein sequence ID" value="EDV34492.1"/>
    <property type="molecule type" value="Genomic_DNA"/>
</dbReference>
<dbReference type="SMR" id="B3MRT7"/>
<dbReference type="FunCoup" id="B3MRT7">
    <property type="interactions" value="1051"/>
</dbReference>
<dbReference type="STRING" id="7217.B3MRT7"/>
<dbReference type="EnsemblMetazoa" id="FBtr0125632">
    <property type="protein sequence ID" value="FBpp0124124"/>
    <property type="gene ID" value="FBgn0097937"/>
</dbReference>
<dbReference type="EnsemblMetazoa" id="XM_001964007.4">
    <property type="protein sequence ID" value="XP_001964043.1"/>
    <property type="gene ID" value="LOC6503623"/>
</dbReference>
<dbReference type="GeneID" id="6503623"/>
<dbReference type="KEGG" id="dan:6503623"/>
<dbReference type="eggNOG" id="KOG2358">
    <property type="taxonomic scope" value="Eukaryota"/>
</dbReference>
<dbReference type="HOGENOM" id="CLU_060555_0_2_1"/>
<dbReference type="InParanoid" id="B3MRT7"/>
<dbReference type="OMA" id="AIMEHYM"/>
<dbReference type="OrthoDB" id="565552at2759"/>
<dbReference type="PhylomeDB" id="B3MRT7"/>
<dbReference type="Proteomes" id="UP000007801">
    <property type="component" value="Unassembled WGS sequence"/>
</dbReference>
<dbReference type="GO" id="GO:0005739">
    <property type="term" value="C:mitochondrion"/>
    <property type="evidence" value="ECO:0007669"/>
    <property type="project" value="UniProtKB-SubCell"/>
</dbReference>
<dbReference type="GO" id="GO:0005506">
    <property type="term" value="F:iron ion binding"/>
    <property type="evidence" value="ECO:0007669"/>
    <property type="project" value="InterPro"/>
</dbReference>
<dbReference type="GO" id="GO:0051536">
    <property type="term" value="F:iron-sulfur cluster binding"/>
    <property type="evidence" value="ECO:0007669"/>
    <property type="project" value="UniProtKB-KW"/>
</dbReference>
<dbReference type="GO" id="GO:0016226">
    <property type="term" value="P:iron-sulfur cluster assembly"/>
    <property type="evidence" value="ECO:0007669"/>
    <property type="project" value="InterPro"/>
</dbReference>
<dbReference type="FunFam" id="3.30.300.130:FF:000001">
    <property type="entry name" value="NFU1 iron-sulfur cluster scaffold"/>
    <property type="match status" value="1"/>
</dbReference>
<dbReference type="FunFam" id="3.30.1370.70:FF:000002">
    <property type="entry name" value="NFU1 iron-sulfur cluster scaffold homolog, mitochondrial"/>
    <property type="match status" value="1"/>
</dbReference>
<dbReference type="Gene3D" id="3.30.300.130">
    <property type="entry name" value="Fe-S cluster assembly (FSCA)"/>
    <property type="match status" value="1"/>
</dbReference>
<dbReference type="Gene3D" id="3.30.1370.70">
    <property type="entry name" value="Scaffold protein Nfu/NifU, N-terminal domain"/>
    <property type="match status" value="1"/>
</dbReference>
<dbReference type="InterPro" id="IPR034904">
    <property type="entry name" value="FSCA_dom_sf"/>
</dbReference>
<dbReference type="InterPro" id="IPR014824">
    <property type="entry name" value="Nfu/NifU_N"/>
</dbReference>
<dbReference type="InterPro" id="IPR036498">
    <property type="entry name" value="Nfu/NifU_N_sf"/>
</dbReference>
<dbReference type="InterPro" id="IPR001075">
    <property type="entry name" value="NIF_FeS_clus_asmbl_NifU_C"/>
</dbReference>
<dbReference type="PANTHER" id="PTHR11178">
    <property type="entry name" value="IRON-SULFUR CLUSTER SCAFFOLD PROTEIN NFU-RELATED"/>
    <property type="match status" value="1"/>
</dbReference>
<dbReference type="PANTHER" id="PTHR11178:SF1">
    <property type="entry name" value="NFU1 IRON-SULFUR CLUSTER SCAFFOLD HOMOLOG, MITOCHONDRIAL"/>
    <property type="match status" value="1"/>
</dbReference>
<dbReference type="Pfam" id="PF08712">
    <property type="entry name" value="Nfu_N"/>
    <property type="match status" value="1"/>
</dbReference>
<dbReference type="Pfam" id="PF01106">
    <property type="entry name" value="NifU"/>
    <property type="match status" value="1"/>
</dbReference>
<dbReference type="SMART" id="SM00932">
    <property type="entry name" value="Nfu_N"/>
    <property type="match status" value="1"/>
</dbReference>
<dbReference type="SUPFAM" id="SSF117916">
    <property type="entry name" value="Fe-S cluster assembly (FSCA) domain-like"/>
    <property type="match status" value="1"/>
</dbReference>
<dbReference type="SUPFAM" id="SSF110836">
    <property type="entry name" value="Hypothetical protein SAV1430"/>
    <property type="match status" value="1"/>
</dbReference>